<name>GLUC_ALLMI</name>
<keyword id="KW-0903">Direct protein sequencing</keyword>
<keyword id="KW-0372">Hormone</keyword>
<keyword id="KW-0964">Secreted</keyword>
<comment type="function">
    <text>Glucagon plays a key role in glucose metabolism and homeostasis. Regulates blood glucose by increasing gluconeogenesis and decreasing glycolysis.</text>
</comment>
<comment type="subcellular location">
    <subcellularLocation>
        <location>Secreted</location>
    </subcellularLocation>
</comment>
<comment type="induction">
    <text>Produced in the A cells of the islets of Langerhans in response to a drop in blood sugar concentration.</text>
</comment>
<comment type="similarity">
    <text evidence="1">Belongs to the glucagon family.</text>
</comment>
<reference key="1">
    <citation type="journal article" date="1984" name="Gen. Comp. Endocrinol.">
        <title>Isolation and characterization of reptilian insulin, glucagon, and pancreatic polypeptide: complete amino acid sequence of alligator (Alligator mississippiensis) insulin and pancreatic polypeptide.</title>
        <authorList>
            <person name="Lance V."/>
            <person name="Hamilton J.W."/>
            <person name="Rouse J.B."/>
            <person name="Kimmel J.R."/>
            <person name="Pollock H.G."/>
        </authorList>
    </citation>
    <scope>PROTEIN SEQUENCE</scope>
</reference>
<dbReference type="SMR" id="P68954"/>
<dbReference type="eggNOG" id="ENOG502RYPR">
    <property type="taxonomic scope" value="Eukaryota"/>
</dbReference>
<dbReference type="GO" id="GO:0005576">
    <property type="term" value="C:extracellular region"/>
    <property type="evidence" value="ECO:0007669"/>
    <property type="project" value="UniProtKB-SubCell"/>
</dbReference>
<dbReference type="GO" id="GO:0005179">
    <property type="term" value="F:hormone activity"/>
    <property type="evidence" value="ECO:0007669"/>
    <property type="project" value="UniProtKB-KW"/>
</dbReference>
<dbReference type="Gene3D" id="6.10.250.590">
    <property type="match status" value="1"/>
</dbReference>
<dbReference type="InterPro" id="IPR015550">
    <property type="entry name" value="Glucagon"/>
</dbReference>
<dbReference type="InterPro" id="IPR000532">
    <property type="entry name" value="Glucagon_GIP_secretin_VIP"/>
</dbReference>
<dbReference type="PANTHER" id="PTHR11418">
    <property type="entry name" value="GLUCAGON"/>
    <property type="match status" value="1"/>
</dbReference>
<dbReference type="PANTHER" id="PTHR11418:SF0">
    <property type="entry name" value="PRO-GLUCAGON"/>
    <property type="match status" value="1"/>
</dbReference>
<dbReference type="Pfam" id="PF00123">
    <property type="entry name" value="Hormone_2"/>
    <property type="match status" value="1"/>
</dbReference>
<dbReference type="PRINTS" id="PR00275">
    <property type="entry name" value="GLUCAGON"/>
</dbReference>
<dbReference type="SMART" id="SM00070">
    <property type="entry name" value="GLUCA"/>
    <property type="match status" value="1"/>
</dbReference>
<dbReference type="PROSITE" id="PS00260">
    <property type="entry name" value="GLUCAGON"/>
    <property type="match status" value="1"/>
</dbReference>
<feature type="peptide" id="PRO_0000043921" description="Glucagon">
    <location>
        <begin position="1"/>
        <end position="29"/>
    </location>
</feature>
<protein>
    <recommendedName>
        <fullName>Glucagon</fullName>
    </recommendedName>
</protein>
<organism>
    <name type="scientific">Alligator mississippiensis</name>
    <name type="common">American alligator</name>
    <dbReference type="NCBI Taxonomy" id="8496"/>
    <lineage>
        <taxon>Eukaryota</taxon>
        <taxon>Metazoa</taxon>
        <taxon>Chordata</taxon>
        <taxon>Craniata</taxon>
        <taxon>Vertebrata</taxon>
        <taxon>Euteleostomi</taxon>
        <taxon>Archelosauria</taxon>
        <taxon>Archosauria</taxon>
        <taxon>Crocodylia</taxon>
        <taxon>Alligatoridae</taxon>
        <taxon>Alligatorinae</taxon>
        <taxon>Alligator</taxon>
    </lineage>
</organism>
<sequence length="29" mass="3470">HSQGTFTSDYSKYLDTRRAQDFVQWLMST</sequence>
<accession>P68954</accession>
<accession>P01276</accession>
<proteinExistence type="evidence at protein level"/>
<gene>
    <name type="primary">GCG</name>
</gene>
<evidence type="ECO:0000305" key="1"/>